<protein>
    <recommendedName>
        <fullName evidence="1">Ribose-5-phosphate isomerase A</fullName>
        <ecNumber evidence="1">5.3.1.6</ecNumber>
    </recommendedName>
    <alternativeName>
        <fullName evidence="1">Phosphoriboisomerase A</fullName>
        <shortName evidence="1">PRI</shortName>
    </alternativeName>
</protein>
<evidence type="ECO:0000255" key="1">
    <source>
        <dbReference type="HAMAP-Rule" id="MF_00170"/>
    </source>
</evidence>
<feature type="chain" id="PRO_1000016935" description="Ribose-5-phosphate isomerase A">
    <location>
        <begin position="1"/>
        <end position="262"/>
    </location>
</feature>
<feature type="active site" description="Proton acceptor" evidence="1">
    <location>
        <position position="111"/>
    </location>
</feature>
<feature type="binding site" evidence="1">
    <location>
        <begin position="33"/>
        <end position="36"/>
    </location>
    <ligand>
        <name>substrate</name>
    </ligand>
</feature>
<feature type="binding site" evidence="1">
    <location>
        <begin position="89"/>
        <end position="92"/>
    </location>
    <ligand>
        <name>substrate</name>
    </ligand>
</feature>
<feature type="binding site" evidence="1">
    <location>
        <begin position="102"/>
        <end position="105"/>
    </location>
    <ligand>
        <name>substrate</name>
    </ligand>
</feature>
<feature type="binding site" evidence="1">
    <location>
        <position position="129"/>
    </location>
    <ligand>
        <name>substrate</name>
    </ligand>
</feature>
<dbReference type="EC" id="5.3.1.6" evidence="1"/>
<dbReference type="EMBL" id="CP000264">
    <property type="protein sequence ID" value="ABD56092.1"/>
    <property type="molecule type" value="Genomic_DNA"/>
</dbReference>
<dbReference type="RefSeq" id="WP_011456296.1">
    <property type="nucleotide sequence ID" value="NC_007802.1"/>
</dbReference>
<dbReference type="SMR" id="Q28MH0"/>
<dbReference type="STRING" id="290400.Jann_3175"/>
<dbReference type="KEGG" id="jan:Jann_3175"/>
<dbReference type="eggNOG" id="COG0120">
    <property type="taxonomic scope" value="Bacteria"/>
</dbReference>
<dbReference type="HOGENOM" id="CLU_056590_1_0_5"/>
<dbReference type="OrthoDB" id="5870696at2"/>
<dbReference type="UniPathway" id="UPA00115">
    <property type="reaction ID" value="UER00412"/>
</dbReference>
<dbReference type="Proteomes" id="UP000008326">
    <property type="component" value="Chromosome"/>
</dbReference>
<dbReference type="GO" id="GO:0005829">
    <property type="term" value="C:cytosol"/>
    <property type="evidence" value="ECO:0007669"/>
    <property type="project" value="TreeGrafter"/>
</dbReference>
<dbReference type="GO" id="GO:0004751">
    <property type="term" value="F:ribose-5-phosphate isomerase activity"/>
    <property type="evidence" value="ECO:0007669"/>
    <property type="project" value="UniProtKB-UniRule"/>
</dbReference>
<dbReference type="GO" id="GO:0006014">
    <property type="term" value="P:D-ribose metabolic process"/>
    <property type="evidence" value="ECO:0007669"/>
    <property type="project" value="TreeGrafter"/>
</dbReference>
<dbReference type="GO" id="GO:0009052">
    <property type="term" value="P:pentose-phosphate shunt, non-oxidative branch"/>
    <property type="evidence" value="ECO:0007669"/>
    <property type="project" value="UniProtKB-UniRule"/>
</dbReference>
<dbReference type="CDD" id="cd01398">
    <property type="entry name" value="RPI_A"/>
    <property type="match status" value="1"/>
</dbReference>
<dbReference type="FunFam" id="3.40.50.1360:FF:000001">
    <property type="entry name" value="Ribose-5-phosphate isomerase A"/>
    <property type="match status" value="1"/>
</dbReference>
<dbReference type="Gene3D" id="3.30.70.260">
    <property type="match status" value="1"/>
</dbReference>
<dbReference type="Gene3D" id="3.40.50.1360">
    <property type="match status" value="1"/>
</dbReference>
<dbReference type="HAMAP" id="MF_00170">
    <property type="entry name" value="Rib_5P_isom_A"/>
    <property type="match status" value="1"/>
</dbReference>
<dbReference type="InterPro" id="IPR037171">
    <property type="entry name" value="NagB/RpiA_transferase-like"/>
</dbReference>
<dbReference type="InterPro" id="IPR020672">
    <property type="entry name" value="Ribose5P_isomerase_typA_subgr"/>
</dbReference>
<dbReference type="InterPro" id="IPR004788">
    <property type="entry name" value="Ribose5P_isomerase_type_A"/>
</dbReference>
<dbReference type="NCBIfam" id="NF001924">
    <property type="entry name" value="PRK00702.1"/>
    <property type="match status" value="1"/>
</dbReference>
<dbReference type="NCBIfam" id="TIGR00021">
    <property type="entry name" value="rpiA"/>
    <property type="match status" value="1"/>
</dbReference>
<dbReference type="PANTHER" id="PTHR11934">
    <property type="entry name" value="RIBOSE-5-PHOSPHATE ISOMERASE"/>
    <property type="match status" value="1"/>
</dbReference>
<dbReference type="PANTHER" id="PTHR11934:SF0">
    <property type="entry name" value="RIBOSE-5-PHOSPHATE ISOMERASE"/>
    <property type="match status" value="1"/>
</dbReference>
<dbReference type="Pfam" id="PF06026">
    <property type="entry name" value="Rib_5-P_isom_A"/>
    <property type="match status" value="1"/>
</dbReference>
<dbReference type="SUPFAM" id="SSF75445">
    <property type="entry name" value="D-ribose-5-phosphate isomerase (RpiA), lid domain"/>
    <property type="match status" value="1"/>
</dbReference>
<dbReference type="SUPFAM" id="SSF100950">
    <property type="entry name" value="NagB/RpiA/CoA transferase-like"/>
    <property type="match status" value="1"/>
</dbReference>
<reference key="1">
    <citation type="submission" date="2006-02" db="EMBL/GenBank/DDBJ databases">
        <title>Complete sequence of chromosome of Jannaschia sp. CCS1.</title>
        <authorList>
            <consortium name="US DOE Joint Genome Institute"/>
            <person name="Copeland A."/>
            <person name="Lucas S."/>
            <person name="Lapidus A."/>
            <person name="Barry K."/>
            <person name="Detter J.C."/>
            <person name="Glavina del Rio T."/>
            <person name="Hammon N."/>
            <person name="Israni S."/>
            <person name="Pitluck S."/>
            <person name="Brettin T."/>
            <person name="Bruce D."/>
            <person name="Han C."/>
            <person name="Tapia R."/>
            <person name="Gilna P."/>
            <person name="Chertkov O."/>
            <person name="Saunders E."/>
            <person name="Schmutz J."/>
            <person name="Larimer F."/>
            <person name="Land M."/>
            <person name="Kyrpides N."/>
            <person name="Lykidis A."/>
            <person name="Moran M.A."/>
            <person name="Belas R."/>
            <person name="Ye W."/>
            <person name="Buchan A."/>
            <person name="Gonzalez J.M."/>
            <person name="Schell M.A."/>
            <person name="Richardson P."/>
        </authorList>
    </citation>
    <scope>NUCLEOTIDE SEQUENCE [LARGE SCALE GENOMIC DNA]</scope>
    <source>
        <strain>CCS1</strain>
    </source>
</reference>
<proteinExistence type="inferred from homology"/>
<keyword id="KW-0413">Isomerase</keyword>
<keyword id="KW-1185">Reference proteome</keyword>
<comment type="function">
    <text evidence="1">Catalyzes the reversible conversion of ribose-5-phosphate to ribulose 5-phosphate.</text>
</comment>
<comment type="catalytic activity">
    <reaction evidence="1">
        <text>aldehydo-D-ribose 5-phosphate = D-ribulose 5-phosphate</text>
        <dbReference type="Rhea" id="RHEA:14657"/>
        <dbReference type="ChEBI" id="CHEBI:58121"/>
        <dbReference type="ChEBI" id="CHEBI:58273"/>
        <dbReference type="EC" id="5.3.1.6"/>
    </reaction>
</comment>
<comment type="pathway">
    <text evidence="1">Carbohydrate degradation; pentose phosphate pathway; D-ribose 5-phosphate from D-ribulose 5-phosphate (non-oxidative stage): step 1/1.</text>
</comment>
<comment type="subunit">
    <text evidence="1">Homodimer.</text>
</comment>
<comment type="similarity">
    <text evidence="1">Belongs to the ribose 5-phosphate isomerase family.</text>
</comment>
<accession>Q28MH0</accession>
<gene>
    <name evidence="1" type="primary">rpiA</name>
    <name type="ordered locus">Jann_3175</name>
</gene>
<name>RPIA_JANSC</name>
<organism>
    <name type="scientific">Jannaschia sp. (strain CCS1)</name>
    <dbReference type="NCBI Taxonomy" id="290400"/>
    <lineage>
        <taxon>Bacteria</taxon>
        <taxon>Pseudomonadati</taxon>
        <taxon>Pseudomonadota</taxon>
        <taxon>Alphaproteobacteria</taxon>
        <taxon>Rhodobacterales</taxon>
        <taxon>Roseobacteraceae</taxon>
        <taxon>Jannaschia</taxon>
    </lineage>
</organism>
<sequence length="262" mass="28363">MTAELSPIDRAKYVAARRAVEYVEDGMRVGLGTGSTAAWMVRCLGELVRDEGMQITGVATSTRTADLARDVGVTVKTLDDVRWLDLTIDGTDEYDPNLNLIKGGGGALLHEKVVATASDQMVVIADPTKQVDTLGAFPLPVEVIPFGWQTTKALIEEMLSNLDVLGRSASLRLSGAEPFRTDEGNLILDLHLRRIAQPAQLSLVLNQIPGVVENGLFLDICDVLVIGNADGTVEVRDINNGTIEHERVDVAETDNLFVEVKE</sequence>